<proteinExistence type="inferred from homology"/>
<name>RNAS6_PAPHA</name>
<sequence length="150" mass="17237">MVLCFPLLLLLLVLWGPVCLLHAWPKHLTRAHWFEIQHIQPSPLQCNRAMSGINNYTQHCKHQNTFLHDSFQNVAAVCDLLSIICKNRQHNCHQSSKPVNMTDCRLTSGKYPQCRYSTAAQYKFFIVACDPPQKSDPPYKLVPVHLDSIL</sequence>
<comment type="function">
    <text evidence="3">Ribonuclease which shows a preference for the pyrimidines uridine and cytosine. Has potent antibacterial activity against a range of Gram-positive and Gram-negative bacteria, including P.aeruginosa, A.baumanii, M.luteus, S.aureus, E.faecalis, E.faecium, S.saprophyticus and E.coli. Causes loss of bacterial membrane integrity, and also promotes agglutination of Gram-negative bacteria. Probably contributes to urinary tract sterility. Bactericidal activity is independent of RNase activity.</text>
</comment>
<comment type="subunit">
    <text evidence="3">Interacts (via N-terminus) with bacterial lipopolysaccharide (LPS).</text>
</comment>
<comment type="subcellular location">
    <subcellularLocation>
        <location evidence="3">Secreted</location>
    </subcellularLocation>
    <subcellularLocation>
        <location evidence="3">Lysosome</location>
    </subcellularLocation>
    <subcellularLocation>
        <location evidence="3">Cytoplasmic granule</location>
    </subcellularLocation>
</comment>
<comment type="similarity">
    <text evidence="6">Belongs to the pancreatic ribonuclease family.</text>
</comment>
<accession>O46527</accession>
<reference key="1">
    <citation type="journal article" date="1998" name="Genome Res.">
        <title>Ribonuclease k6: chromosomal mapping and divergent rates of evolution within the RNase A gene superfamily.</title>
        <authorList>
            <person name="Deming M.S."/>
            <person name="Dyer K.D."/>
            <person name="Bankier A.T."/>
            <person name="Piper M.B."/>
            <person name="Dear P.H."/>
            <person name="Rosenberg H.F."/>
        </authorList>
    </citation>
    <scope>NUCLEOTIDE SEQUENCE [GENOMIC DNA]</scope>
</reference>
<feature type="signal peptide" evidence="1">
    <location>
        <begin position="1"/>
        <end position="23"/>
    </location>
</feature>
<feature type="chain" id="PRO_0000030896" description="Ribonuclease K6">
    <location>
        <begin position="24"/>
        <end position="150"/>
    </location>
</feature>
<feature type="active site" description="Proton acceptor" evidence="2">
    <location>
        <position position="38"/>
    </location>
</feature>
<feature type="active site" description="Proton donor" evidence="2">
    <location>
        <position position="145"/>
    </location>
</feature>
<feature type="binding site" evidence="1">
    <location>
        <begin position="61"/>
        <end position="65"/>
    </location>
    <ligand>
        <name>substrate</name>
    </ligand>
</feature>
<feature type="binding site" evidence="1">
    <location>
        <position position="86"/>
    </location>
    <ligand>
        <name>substrate</name>
    </ligand>
</feature>
<feature type="binding site" evidence="1">
    <location>
        <position position="105"/>
    </location>
    <ligand>
        <name>substrate</name>
    </ligand>
</feature>
<feature type="site" description="Facilitates cleavage of polynucleotide substrates" evidence="3">
    <location>
        <position position="59"/>
    </location>
</feature>
<feature type="site" description="Critical for catalytic activity" evidence="4">
    <location>
        <position position="61"/>
    </location>
</feature>
<feature type="glycosylation site" description="N-linked (GlcNAc...) asparagine" evidence="5">
    <location>
        <position position="55"/>
    </location>
</feature>
<feature type="glycosylation site" description="N-linked (GlcNAc...) asparagine" evidence="5">
    <location>
        <position position="100"/>
    </location>
</feature>
<feature type="disulfide bond" evidence="3">
    <location>
        <begin position="46"/>
        <end position="104"/>
    </location>
</feature>
<feature type="disulfide bond" evidence="3">
    <location>
        <begin position="60"/>
        <end position="114"/>
    </location>
</feature>
<feature type="disulfide bond" evidence="3">
    <location>
        <begin position="78"/>
        <end position="129"/>
    </location>
</feature>
<feature type="disulfide bond" evidence="3">
    <location>
        <begin position="85"/>
        <end position="92"/>
    </location>
</feature>
<gene>
    <name type="primary">RNASE6</name>
</gene>
<keyword id="KW-0044">Antibiotic</keyword>
<keyword id="KW-0929">Antimicrobial</keyword>
<keyword id="KW-1015">Disulfide bond</keyword>
<keyword id="KW-0255">Endonuclease</keyword>
<keyword id="KW-0325">Glycoprotein</keyword>
<keyword id="KW-0378">Hydrolase</keyword>
<keyword id="KW-0458">Lysosome</keyword>
<keyword id="KW-0540">Nuclease</keyword>
<keyword id="KW-0964">Secreted</keyword>
<keyword id="KW-0732">Signal</keyword>
<organism>
    <name type="scientific">Papio hamadryas</name>
    <name type="common">Hamadryas baboon</name>
    <dbReference type="NCBI Taxonomy" id="9557"/>
    <lineage>
        <taxon>Eukaryota</taxon>
        <taxon>Metazoa</taxon>
        <taxon>Chordata</taxon>
        <taxon>Craniata</taxon>
        <taxon>Vertebrata</taxon>
        <taxon>Euteleostomi</taxon>
        <taxon>Mammalia</taxon>
        <taxon>Eutheria</taxon>
        <taxon>Euarchontoglires</taxon>
        <taxon>Primates</taxon>
        <taxon>Haplorrhini</taxon>
        <taxon>Catarrhini</taxon>
        <taxon>Cercopithecidae</taxon>
        <taxon>Cercopithecinae</taxon>
        <taxon>Papio</taxon>
    </lineage>
</organism>
<evidence type="ECO:0000250" key="1"/>
<evidence type="ECO:0000250" key="2">
    <source>
        <dbReference type="UniProtKB" id="Q64438"/>
    </source>
</evidence>
<evidence type="ECO:0000250" key="3">
    <source>
        <dbReference type="UniProtKB" id="Q93091"/>
    </source>
</evidence>
<evidence type="ECO:0000250" key="4">
    <source>
        <dbReference type="UniProtKB" id="Q9H1E1"/>
    </source>
</evidence>
<evidence type="ECO:0000255" key="5"/>
<evidence type="ECO:0000305" key="6"/>
<dbReference type="EC" id="3.1.27.-"/>
<dbReference type="EMBL" id="AF037083">
    <property type="protein sequence ID" value="AAB94745.1"/>
    <property type="molecule type" value="Genomic_DNA"/>
</dbReference>
<dbReference type="SMR" id="O46527"/>
<dbReference type="GlyCosmos" id="O46527">
    <property type="glycosylation" value="2 sites, No reported glycans"/>
</dbReference>
<dbReference type="GO" id="GO:0005615">
    <property type="term" value="C:extracellular space"/>
    <property type="evidence" value="ECO:0007669"/>
    <property type="project" value="TreeGrafter"/>
</dbReference>
<dbReference type="GO" id="GO:0005764">
    <property type="term" value="C:lysosome"/>
    <property type="evidence" value="ECO:0007669"/>
    <property type="project" value="UniProtKB-SubCell"/>
</dbReference>
<dbReference type="GO" id="GO:0004519">
    <property type="term" value="F:endonuclease activity"/>
    <property type="evidence" value="ECO:0007669"/>
    <property type="project" value="UniProtKB-KW"/>
</dbReference>
<dbReference type="GO" id="GO:0003676">
    <property type="term" value="F:nucleic acid binding"/>
    <property type="evidence" value="ECO:0007669"/>
    <property type="project" value="InterPro"/>
</dbReference>
<dbReference type="GO" id="GO:0004540">
    <property type="term" value="F:RNA nuclease activity"/>
    <property type="evidence" value="ECO:0007669"/>
    <property type="project" value="TreeGrafter"/>
</dbReference>
<dbReference type="GO" id="GO:0019731">
    <property type="term" value="P:antibacterial humoral response"/>
    <property type="evidence" value="ECO:0007669"/>
    <property type="project" value="TreeGrafter"/>
</dbReference>
<dbReference type="GO" id="GO:0061844">
    <property type="term" value="P:antimicrobial humoral immune response mediated by antimicrobial peptide"/>
    <property type="evidence" value="ECO:0007669"/>
    <property type="project" value="TreeGrafter"/>
</dbReference>
<dbReference type="GO" id="GO:0050829">
    <property type="term" value="P:defense response to Gram-negative bacterium"/>
    <property type="evidence" value="ECO:0007669"/>
    <property type="project" value="TreeGrafter"/>
</dbReference>
<dbReference type="GO" id="GO:0050830">
    <property type="term" value="P:defense response to Gram-positive bacterium"/>
    <property type="evidence" value="ECO:0007669"/>
    <property type="project" value="TreeGrafter"/>
</dbReference>
<dbReference type="GO" id="GO:0045087">
    <property type="term" value="P:innate immune response"/>
    <property type="evidence" value="ECO:0007669"/>
    <property type="project" value="TreeGrafter"/>
</dbReference>
<dbReference type="CDD" id="cd06265">
    <property type="entry name" value="RNase_A_canonical"/>
    <property type="match status" value="1"/>
</dbReference>
<dbReference type="FunFam" id="3.10.130.10:FF:000001">
    <property type="entry name" value="Ribonuclease pancreatic"/>
    <property type="match status" value="1"/>
</dbReference>
<dbReference type="Gene3D" id="3.10.130.10">
    <property type="entry name" value="Ribonuclease A-like domain"/>
    <property type="match status" value="1"/>
</dbReference>
<dbReference type="InterPro" id="IPR001427">
    <property type="entry name" value="RNaseA"/>
</dbReference>
<dbReference type="InterPro" id="IPR036816">
    <property type="entry name" value="RNaseA-like_dom_sf"/>
</dbReference>
<dbReference type="InterPro" id="IPR023411">
    <property type="entry name" value="RNaseA_AS"/>
</dbReference>
<dbReference type="InterPro" id="IPR023412">
    <property type="entry name" value="RNaseA_domain"/>
</dbReference>
<dbReference type="PANTHER" id="PTHR11437">
    <property type="entry name" value="RIBONUCLEASE"/>
    <property type="match status" value="1"/>
</dbReference>
<dbReference type="PANTHER" id="PTHR11437:SF4">
    <property type="entry name" value="RIBONUCLEASE K6"/>
    <property type="match status" value="1"/>
</dbReference>
<dbReference type="Pfam" id="PF00074">
    <property type="entry name" value="RnaseA"/>
    <property type="match status" value="1"/>
</dbReference>
<dbReference type="PRINTS" id="PR00794">
    <property type="entry name" value="RIBONUCLEASE"/>
</dbReference>
<dbReference type="SMART" id="SM00092">
    <property type="entry name" value="RNAse_Pc"/>
    <property type="match status" value="1"/>
</dbReference>
<dbReference type="SUPFAM" id="SSF54076">
    <property type="entry name" value="RNase A-like"/>
    <property type="match status" value="1"/>
</dbReference>
<dbReference type="PROSITE" id="PS00127">
    <property type="entry name" value="RNASE_PANCREATIC"/>
    <property type="match status" value="1"/>
</dbReference>
<protein>
    <recommendedName>
        <fullName>Ribonuclease K6</fullName>
        <shortName>RNase K6</shortName>
        <ecNumber>3.1.27.-</ecNumber>
    </recommendedName>
</protein>